<organism>
    <name type="scientific">Caenorhabditis elegans</name>
    <dbReference type="NCBI Taxonomy" id="6239"/>
    <lineage>
        <taxon>Eukaryota</taxon>
        <taxon>Metazoa</taxon>
        <taxon>Ecdysozoa</taxon>
        <taxon>Nematoda</taxon>
        <taxon>Chromadorea</taxon>
        <taxon>Rhabditida</taxon>
        <taxon>Rhabditina</taxon>
        <taxon>Rhabditomorpha</taxon>
        <taxon>Rhabditoidea</taxon>
        <taxon>Rhabditidae</taxon>
        <taxon>Peloderinae</taxon>
        <taxon>Caenorhabditis</taxon>
    </lineage>
</organism>
<protein>
    <recommendedName>
        <fullName>Putative casein kinase I C03C10.2</fullName>
        <ecNumber>2.7.11.1</ecNumber>
    </recommendedName>
</protein>
<name>YKL2_CAEEL</name>
<sequence>MNKSKEAETDITQIFPNLDILPKKFSAKELAERRIKKLHVAPGSIFMNRWSIEGVIGNGGYGQIFMVMDVKKNDERAMKIEPKLRAEVITKRMIMEQQVLMKMQGKTHIPTMYASGFNDQFNFIIMQLLSMNVGDFRKRSPLGRLSKETVGRIAYQTLNALKDIHDMGYVHRDVKPANICFGVHAQNRHILYLLDFGLVRRFKTESGVCIPWRINAGFKGTERYVSVRVHEKLEQTPWDDAFSVLYTAYELVVGELPWRYLEDIHEIHGVKKLMNEVTKNGEMFKDIASILVDFHKMILECDPVVELPYEKLLECLKCLYSPKSLLEPYDWEDGYKTTLNI</sequence>
<feature type="chain" id="PRO_0000192868" description="Putative casein kinase I C03C10.2">
    <location>
        <begin position="1"/>
        <end position="341"/>
    </location>
</feature>
<feature type="domain" description="Protein kinase" evidence="1">
    <location>
        <begin position="50"/>
        <end position="326"/>
    </location>
</feature>
<feature type="active site" description="Proton acceptor" evidence="1 2">
    <location>
        <position position="173"/>
    </location>
</feature>
<feature type="binding site" evidence="1">
    <location>
        <begin position="56"/>
        <end position="64"/>
    </location>
    <ligand>
        <name>ATP</name>
        <dbReference type="ChEBI" id="CHEBI:30616"/>
    </ligand>
</feature>
<feature type="binding site" evidence="1">
    <location>
        <position position="79"/>
    </location>
    <ligand>
        <name>ATP</name>
        <dbReference type="ChEBI" id="CHEBI:30616"/>
    </ligand>
</feature>
<evidence type="ECO:0000255" key="1">
    <source>
        <dbReference type="PROSITE-ProRule" id="PRU00159"/>
    </source>
</evidence>
<evidence type="ECO:0000255" key="2">
    <source>
        <dbReference type="PROSITE-ProRule" id="PRU10027"/>
    </source>
</evidence>
<evidence type="ECO:0000305" key="3"/>
<accession>P42169</accession>
<gene>
    <name type="ORF">C03C10.2</name>
</gene>
<dbReference type="EC" id="2.7.11.1"/>
<dbReference type="EMBL" id="Z35637">
    <property type="protein sequence ID" value="CAA84687.2"/>
    <property type="molecule type" value="Genomic_DNA"/>
</dbReference>
<dbReference type="PIR" id="T18875">
    <property type="entry name" value="T18875"/>
</dbReference>
<dbReference type="RefSeq" id="NP_497820.2">
    <property type="nucleotide sequence ID" value="NM_065419.4"/>
</dbReference>
<dbReference type="SMR" id="P42169"/>
<dbReference type="FunCoup" id="P42169">
    <property type="interactions" value="112"/>
</dbReference>
<dbReference type="STRING" id="6239.C03C10.2.1"/>
<dbReference type="PaxDb" id="6239-C03C10.2"/>
<dbReference type="EnsemblMetazoa" id="C03C10.2.1">
    <property type="protein sequence ID" value="C03C10.2.1"/>
    <property type="gene ID" value="WBGene00007269"/>
</dbReference>
<dbReference type="GeneID" id="182156"/>
<dbReference type="KEGG" id="cel:CELE_C03C10.2"/>
<dbReference type="UCSC" id="C03C10.2">
    <property type="organism name" value="c. elegans"/>
</dbReference>
<dbReference type="AGR" id="WB:WBGene00007269"/>
<dbReference type="CTD" id="182156"/>
<dbReference type="WormBase" id="C03C10.2">
    <property type="protein sequence ID" value="CE44177"/>
    <property type="gene ID" value="WBGene00007269"/>
</dbReference>
<dbReference type="eggNOG" id="KOG1164">
    <property type="taxonomic scope" value="Eukaryota"/>
</dbReference>
<dbReference type="GeneTree" id="ENSGT00970000196243"/>
<dbReference type="HOGENOM" id="CLU_019279_2_5_1"/>
<dbReference type="InParanoid" id="P42169"/>
<dbReference type="OMA" id="KNDERAM"/>
<dbReference type="OrthoDB" id="2687620at2759"/>
<dbReference type="PhylomeDB" id="P42169"/>
<dbReference type="PRO" id="PR:P42169"/>
<dbReference type="Proteomes" id="UP000001940">
    <property type="component" value="Chromosome III"/>
</dbReference>
<dbReference type="Bgee" id="WBGene00007269">
    <property type="expression patterns" value="Expressed in pharyngeal muscle cell (C elegans) and 3 other cell types or tissues"/>
</dbReference>
<dbReference type="GO" id="GO:0005737">
    <property type="term" value="C:cytoplasm"/>
    <property type="evidence" value="ECO:0000318"/>
    <property type="project" value="GO_Central"/>
</dbReference>
<dbReference type="GO" id="GO:0005634">
    <property type="term" value="C:nucleus"/>
    <property type="evidence" value="ECO:0000318"/>
    <property type="project" value="GO_Central"/>
</dbReference>
<dbReference type="GO" id="GO:0005524">
    <property type="term" value="F:ATP binding"/>
    <property type="evidence" value="ECO:0007669"/>
    <property type="project" value="UniProtKB-KW"/>
</dbReference>
<dbReference type="GO" id="GO:0106310">
    <property type="term" value="F:protein serine kinase activity"/>
    <property type="evidence" value="ECO:0007669"/>
    <property type="project" value="RHEA"/>
</dbReference>
<dbReference type="GO" id="GO:0004674">
    <property type="term" value="F:protein serine/threonine kinase activity"/>
    <property type="evidence" value="ECO:0000318"/>
    <property type="project" value="GO_Central"/>
</dbReference>
<dbReference type="GO" id="GO:0007165">
    <property type="term" value="P:signal transduction"/>
    <property type="evidence" value="ECO:0000318"/>
    <property type="project" value="GO_Central"/>
</dbReference>
<dbReference type="FunFam" id="1.10.510.10:FF:000884">
    <property type="entry name" value="Protein CBG08984"/>
    <property type="match status" value="1"/>
</dbReference>
<dbReference type="Gene3D" id="1.10.510.10">
    <property type="entry name" value="Transferase(Phosphotransferase) domain 1"/>
    <property type="match status" value="1"/>
</dbReference>
<dbReference type="InterPro" id="IPR050235">
    <property type="entry name" value="CK1_Ser-Thr_kinase"/>
</dbReference>
<dbReference type="InterPro" id="IPR011009">
    <property type="entry name" value="Kinase-like_dom_sf"/>
</dbReference>
<dbReference type="InterPro" id="IPR000719">
    <property type="entry name" value="Prot_kinase_dom"/>
</dbReference>
<dbReference type="InterPro" id="IPR017441">
    <property type="entry name" value="Protein_kinase_ATP_BS"/>
</dbReference>
<dbReference type="InterPro" id="IPR008271">
    <property type="entry name" value="Ser/Thr_kinase_AS"/>
</dbReference>
<dbReference type="PANTHER" id="PTHR11909">
    <property type="entry name" value="CASEIN KINASE-RELATED"/>
    <property type="match status" value="1"/>
</dbReference>
<dbReference type="Pfam" id="PF00069">
    <property type="entry name" value="Pkinase"/>
    <property type="match status" value="1"/>
</dbReference>
<dbReference type="SMART" id="SM00220">
    <property type="entry name" value="S_TKc"/>
    <property type="match status" value="1"/>
</dbReference>
<dbReference type="SUPFAM" id="SSF56112">
    <property type="entry name" value="Protein kinase-like (PK-like)"/>
    <property type="match status" value="1"/>
</dbReference>
<dbReference type="PROSITE" id="PS00107">
    <property type="entry name" value="PROTEIN_KINASE_ATP"/>
    <property type="match status" value="1"/>
</dbReference>
<dbReference type="PROSITE" id="PS50011">
    <property type="entry name" value="PROTEIN_KINASE_DOM"/>
    <property type="match status" value="1"/>
</dbReference>
<dbReference type="PROSITE" id="PS00108">
    <property type="entry name" value="PROTEIN_KINASE_ST"/>
    <property type="match status" value="1"/>
</dbReference>
<reference key="1">
    <citation type="journal article" date="1998" name="Science">
        <title>Genome sequence of the nematode C. elegans: a platform for investigating biology.</title>
        <authorList>
            <consortium name="The C. elegans sequencing consortium"/>
        </authorList>
    </citation>
    <scope>NUCLEOTIDE SEQUENCE [LARGE SCALE GENOMIC DNA]</scope>
    <source>
        <strain>Bristol N2</strain>
    </source>
</reference>
<comment type="catalytic activity">
    <reaction>
        <text>L-seryl-[protein] + ATP = O-phospho-L-seryl-[protein] + ADP + H(+)</text>
        <dbReference type="Rhea" id="RHEA:17989"/>
        <dbReference type="Rhea" id="RHEA-COMP:9863"/>
        <dbReference type="Rhea" id="RHEA-COMP:11604"/>
        <dbReference type="ChEBI" id="CHEBI:15378"/>
        <dbReference type="ChEBI" id="CHEBI:29999"/>
        <dbReference type="ChEBI" id="CHEBI:30616"/>
        <dbReference type="ChEBI" id="CHEBI:83421"/>
        <dbReference type="ChEBI" id="CHEBI:456216"/>
        <dbReference type="EC" id="2.7.11.1"/>
    </reaction>
</comment>
<comment type="catalytic activity">
    <reaction>
        <text>L-threonyl-[protein] + ATP = O-phospho-L-threonyl-[protein] + ADP + H(+)</text>
        <dbReference type="Rhea" id="RHEA:46608"/>
        <dbReference type="Rhea" id="RHEA-COMP:11060"/>
        <dbReference type="Rhea" id="RHEA-COMP:11605"/>
        <dbReference type="ChEBI" id="CHEBI:15378"/>
        <dbReference type="ChEBI" id="CHEBI:30013"/>
        <dbReference type="ChEBI" id="CHEBI:30616"/>
        <dbReference type="ChEBI" id="CHEBI:61977"/>
        <dbReference type="ChEBI" id="CHEBI:456216"/>
        <dbReference type="EC" id="2.7.11.1"/>
    </reaction>
</comment>
<comment type="similarity">
    <text evidence="3">Belongs to the protein kinase superfamily. CK1 Ser/Thr protein kinase family. Casein kinase I subfamily.</text>
</comment>
<keyword id="KW-0067">ATP-binding</keyword>
<keyword id="KW-0418">Kinase</keyword>
<keyword id="KW-0547">Nucleotide-binding</keyword>
<keyword id="KW-1185">Reference proteome</keyword>
<keyword id="KW-0723">Serine/threonine-protein kinase</keyword>
<keyword id="KW-0808">Transferase</keyword>
<proteinExistence type="inferred from homology"/>